<feature type="chain" id="PRO_0000216245" description="Uncharacterized protein BU078">
    <location>
        <begin position="1"/>
        <end position="112"/>
    </location>
</feature>
<feature type="region of interest" description="Disordered" evidence="1">
    <location>
        <begin position="90"/>
        <end position="112"/>
    </location>
</feature>
<name>Y078_BUCAI</name>
<keyword id="KW-1185">Reference proteome</keyword>
<evidence type="ECO:0000256" key="1">
    <source>
        <dbReference type="SAM" id="MobiDB-lite"/>
    </source>
</evidence>
<proteinExistence type="predicted"/>
<accession>P57180</accession>
<dbReference type="EMBL" id="BA000003">
    <property type="protein sequence ID" value="BAB12798.1"/>
    <property type="molecule type" value="Genomic_DNA"/>
</dbReference>
<dbReference type="RefSeq" id="WP_010895931.1">
    <property type="nucleotide sequence ID" value="NC_002528.1"/>
</dbReference>
<dbReference type="EnsemblBacteria" id="BAB12798">
    <property type="protein sequence ID" value="BAB12798"/>
    <property type="gene ID" value="BAB12798"/>
</dbReference>
<dbReference type="KEGG" id="buc:BU078"/>
<dbReference type="eggNOG" id="ENOG50328W0">
    <property type="taxonomic scope" value="Bacteria"/>
</dbReference>
<dbReference type="HOGENOM" id="CLU_2244836_0_0_6"/>
<dbReference type="Proteomes" id="UP000001806">
    <property type="component" value="Chromosome"/>
</dbReference>
<sequence length="112" mass="13210">MIEIISNITSQDNVSTNKNNSFFNIINSSYLLKSTFSRFNQYFLNKKIEFDHIIAEEKKENKDKIVISSHFIVNYLLNILNQKNTDFNSKNFNNSKNDQIKKKKIDNNQVNL</sequence>
<organism>
    <name type="scientific">Buchnera aphidicola subsp. Acyrthosiphon pisum (strain APS)</name>
    <name type="common">Acyrthosiphon pisum symbiotic bacterium</name>
    <dbReference type="NCBI Taxonomy" id="107806"/>
    <lineage>
        <taxon>Bacteria</taxon>
        <taxon>Pseudomonadati</taxon>
        <taxon>Pseudomonadota</taxon>
        <taxon>Gammaproteobacteria</taxon>
        <taxon>Enterobacterales</taxon>
        <taxon>Erwiniaceae</taxon>
        <taxon>Buchnera</taxon>
    </lineage>
</organism>
<protein>
    <recommendedName>
        <fullName>Uncharacterized protein BU078</fullName>
    </recommendedName>
</protein>
<reference key="1">
    <citation type="journal article" date="2000" name="Nature">
        <title>Genome sequence of the endocellular bacterial symbiont of aphids Buchnera sp. APS.</title>
        <authorList>
            <person name="Shigenobu S."/>
            <person name="Watanabe H."/>
            <person name="Hattori M."/>
            <person name="Sakaki Y."/>
            <person name="Ishikawa H."/>
        </authorList>
    </citation>
    <scope>NUCLEOTIDE SEQUENCE [LARGE SCALE GENOMIC DNA]</scope>
    <source>
        <strain>APS</strain>
    </source>
</reference>
<gene>
    <name type="ordered locus">BU078</name>
</gene>